<organism>
    <name type="scientific">Nitrosococcus oceani (strain ATCC 19707 / BCRC 17464 / JCM 30415 / NCIMB 11848 / C-107)</name>
    <dbReference type="NCBI Taxonomy" id="323261"/>
    <lineage>
        <taxon>Bacteria</taxon>
        <taxon>Pseudomonadati</taxon>
        <taxon>Pseudomonadota</taxon>
        <taxon>Gammaproteobacteria</taxon>
        <taxon>Chromatiales</taxon>
        <taxon>Chromatiaceae</taxon>
        <taxon>Nitrosococcus</taxon>
    </lineage>
</organism>
<feature type="chain" id="PRO_0000265848" description="ATP synthase epsilon chain">
    <location>
        <begin position="1"/>
        <end position="140"/>
    </location>
</feature>
<dbReference type="EMBL" id="CP000127">
    <property type="protein sequence ID" value="ABA59514.1"/>
    <property type="molecule type" value="Genomic_DNA"/>
</dbReference>
<dbReference type="RefSeq" id="WP_002813878.1">
    <property type="nucleotide sequence ID" value="NC_007484.1"/>
</dbReference>
<dbReference type="SMR" id="Q3J6N2"/>
<dbReference type="FunCoup" id="Q3J6N2">
    <property type="interactions" value="388"/>
</dbReference>
<dbReference type="STRING" id="323261.Noc_3073"/>
<dbReference type="KEGG" id="noc:Noc_3073"/>
<dbReference type="eggNOG" id="COG0355">
    <property type="taxonomic scope" value="Bacteria"/>
</dbReference>
<dbReference type="HOGENOM" id="CLU_084338_2_0_6"/>
<dbReference type="InParanoid" id="Q3J6N2"/>
<dbReference type="Proteomes" id="UP000006838">
    <property type="component" value="Chromosome"/>
</dbReference>
<dbReference type="GO" id="GO:0005886">
    <property type="term" value="C:plasma membrane"/>
    <property type="evidence" value="ECO:0007669"/>
    <property type="project" value="UniProtKB-SubCell"/>
</dbReference>
<dbReference type="GO" id="GO:0045259">
    <property type="term" value="C:proton-transporting ATP synthase complex"/>
    <property type="evidence" value="ECO:0007669"/>
    <property type="project" value="UniProtKB-KW"/>
</dbReference>
<dbReference type="GO" id="GO:0005524">
    <property type="term" value="F:ATP binding"/>
    <property type="evidence" value="ECO:0007669"/>
    <property type="project" value="UniProtKB-UniRule"/>
</dbReference>
<dbReference type="GO" id="GO:0046933">
    <property type="term" value="F:proton-transporting ATP synthase activity, rotational mechanism"/>
    <property type="evidence" value="ECO:0007669"/>
    <property type="project" value="UniProtKB-UniRule"/>
</dbReference>
<dbReference type="CDD" id="cd12152">
    <property type="entry name" value="F1-ATPase_delta"/>
    <property type="match status" value="1"/>
</dbReference>
<dbReference type="FunFam" id="1.20.5.440:FF:000001">
    <property type="entry name" value="ATP synthase epsilon chain"/>
    <property type="match status" value="1"/>
</dbReference>
<dbReference type="FunFam" id="2.60.15.10:FF:000001">
    <property type="entry name" value="ATP synthase epsilon chain"/>
    <property type="match status" value="1"/>
</dbReference>
<dbReference type="Gene3D" id="1.20.5.440">
    <property type="entry name" value="ATP synthase delta/epsilon subunit, C-terminal domain"/>
    <property type="match status" value="1"/>
</dbReference>
<dbReference type="Gene3D" id="2.60.15.10">
    <property type="entry name" value="F0F1 ATP synthase delta/epsilon subunit, N-terminal"/>
    <property type="match status" value="1"/>
</dbReference>
<dbReference type="HAMAP" id="MF_00530">
    <property type="entry name" value="ATP_synth_epsil_bac"/>
    <property type="match status" value="1"/>
</dbReference>
<dbReference type="InterPro" id="IPR036794">
    <property type="entry name" value="ATP_F1_dsu/esu_C_sf"/>
</dbReference>
<dbReference type="InterPro" id="IPR001469">
    <property type="entry name" value="ATP_synth_F1_dsu/esu"/>
</dbReference>
<dbReference type="InterPro" id="IPR020546">
    <property type="entry name" value="ATP_synth_F1_dsu/esu_N"/>
</dbReference>
<dbReference type="InterPro" id="IPR020547">
    <property type="entry name" value="ATP_synth_F1_esu_C"/>
</dbReference>
<dbReference type="InterPro" id="IPR036771">
    <property type="entry name" value="ATPsynth_dsu/esu_N"/>
</dbReference>
<dbReference type="NCBIfam" id="TIGR01216">
    <property type="entry name" value="ATP_synt_epsi"/>
    <property type="match status" value="1"/>
</dbReference>
<dbReference type="NCBIfam" id="NF001847">
    <property type="entry name" value="PRK00571.1-4"/>
    <property type="match status" value="1"/>
</dbReference>
<dbReference type="NCBIfam" id="NF009977">
    <property type="entry name" value="PRK13442.1"/>
    <property type="match status" value="1"/>
</dbReference>
<dbReference type="PANTHER" id="PTHR13822">
    <property type="entry name" value="ATP SYNTHASE DELTA/EPSILON CHAIN"/>
    <property type="match status" value="1"/>
</dbReference>
<dbReference type="PANTHER" id="PTHR13822:SF10">
    <property type="entry name" value="ATP SYNTHASE EPSILON CHAIN, CHLOROPLASTIC"/>
    <property type="match status" value="1"/>
</dbReference>
<dbReference type="Pfam" id="PF00401">
    <property type="entry name" value="ATP-synt_DE"/>
    <property type="match status" value="1"/>
</dbReference>
<dbReference type="Pfam" id="PF02823">
    <property type="entry name" value="ATP-synt_DE_N"/>
    <property type="match status" value="1"/>
</dbReference>
<dbReference type="SUPFAM" id="SSF46604">
    <property type="entry name" value="Epsilon subunit of F1F0-ATP synthase C-terminal domain"/>
    <property type="match status" value="1"/>
</dbReference>
<dbReference type="SUPFAM" id="SSF51344">
    <property type="entry name" value="Epsilon subunit of F1F0-ATP synthase N-terminal domain"/>
    <property type="match status" value="1"/>
</dbReference>
<proteinExistence type="inferred from homology"/>
<reference key="1">
    <citation type="journal article" date="2006" name="Appl. Environ. Microbiol.">
        <title>Complete genome sequence of the marine, chemolithoautotrophic, ammonia-oxidizing bacterium Nitrosococcus oceani ATCC 19707.</title>
        <authorList>
            <person name="Klotz M.G."/>
            <person name="Arp D.J."/>
            <person name="Chain P.S.G."/>
            <person name="El-Sheikh A.F."/>
            <person name="Hauser L.J."/>
            <person name="Hommes N.G."/>
            <person name="Larimer F.W."/>
            <person name="Malfatti S.A."/>
            <person name="Norton J.M."/>
            <person name="Poret-Peterson A.T."/>
            <person name="Vergez L.M."/>
            <person name="Ward B.B."/>
        </authorList>
    </citation>
    <scope>NUCLEOTIDE SEQUENCE [LARGE SCALE GENOMIC DNA]</scope>
    <source>
        <strain>ATCC 19707 / BCRC 17464 / JCM 30415 / NCIMB 11848 / C-107</strain>
    </source>
</reference>
<accession>Q3J6N2</accession>
<name>ATPE_NITOC</name>
<gene>
    <name evidence="1" type="primary">atpC</name>
    <name type="ordered locus">Noc_3073</name>
</gene>
<evidence type="ECO:0000255" key="1">
    <source>
        <dbReference type="HAMAP-Rule" id="MF_00530"/>
    </source>
</evidence>
<protein>
    <recommendedName>
        <fullName evidence="1">ATP synthase epsilon chain</fullName>
    </recommendedName>
    <alternativeName>
        <fullName evidence="1">ATP synthase F1 sector epsilon subunit</fullName>
    </alternativeName>
    <alternativeName>
        <fullName evidence="1">F-ATPase epsilon subunit</fullName>
    </alternativeName>
</protein>
<keyword id="KW-0066">ATP synthesis</keyword>
<keyword id="KW-0997">Cell inner membrane</keyword>
<keyword id="KW-1003">Cell membrane</keyword>
<keyword id="KW-0139">CF(1)</keyword>
<keyword id="KW-0375">Hydrogen ion transport</keyword>
<keyword id="KW-0406">Ion transport</keyword>
<keyword id="KW-0472">Membrane</keyword>
<keyword id="KW-1185">Reference proteome</keyword>
<keyword id="KW-0813">Transport</keyword>
<comment type="function">
    <text evidence="1">Produces ATP from ADP in the presence of a proton gradient across the membrane.</text>
</comment>
<comment type="subunit">
    <text>F-type ATPases have 2 components, CF(1) - the catalytic core - and CF(0) - the membrane proton channel. CF(1) has five subunits: alpha(3), beta(3), gamma(1), delta(1), epsilon(1). CF(0) has three main subunits: a, b and c.</text>
</comment>
<comment type="subcellular location">
    <subcellularLocation>
        <location evidence="1">Cell inner membrane</location>
        <topology evidence="1">Peripheral membrane protein</topology>
    </subcellularLocation>
</comment>
<comment type="similarity">
    <text evidence="1">Belongs to the ATPase epsilon chain family.</text>
</comment>
<sequence length="140" mass="15395">MAMTMHVDIVSAEREIFSGTVNMLFAPAEMGEVGIMPRHTPLITRLKPGEVRLQRPEGQEDFFYVSGGLLEVQPHVVTVLADTAQRAADIDEAAALAAKQRAEEALQDREGKLDYARAQAELAEAIAQLKAIQRIRKKLG</sequence>